<reference key="1">
    <citation type="journal article" date="2000" name="Genome Res.">
        <title>Identification of novel human genes evolutionarily conserved in Caenorhabditis elegans by comparative proteomics.</title>
        <authorList>
            <person name="Lai C.-H."/>
            <person name="Chou C.-Y."/>
            <person name="Ch'ang L.-Y."/>
            <person name="Liu C.-S."/>
            <person name="Lin W.-C."/>
        </authorList>
    </citation>
    <scope>NUCLEOTIDE SEQUENCE [LARGE SCALE MRNA] (ISOFORM 3)</scope>
</reference>
<reference key="2">
    <citation type="journal article" date="2001" name="Genome Res.">
        <title>Towards a catalog of human genes and proteins: sequencing and analysis of 500 novel complete protein coding human cDNAs.</title>
        <authorList>
            <person name="Wiemann S."/>
            <person name="Weil B."/>
            <person name="Wellenreuther R."/>
            <person name="Gassenhuber J."/>
            <person name="Glassl S."/>
            <person name="Ansorge W."/>
            <person name="Boecher M."/>
            <person name="Bloecker H."/>
            <person name="Bauersachs S."/>
            <person name="Blum H."/>
            <person name="Lauber J."/>
            <person name="Duesterhoeft A."/>
            <person name="Beyer A."/>
            <person name="Koehrer K."/>
            <person name="Strack N."/>
            <person name="Mewes H.-W."/>
            <person name="Ottenwaelder B."/>
            <person name="Obermaier B."/>
            <person name="Tampe J."/>
            <person name="Heubner D."/>
            <person name="Wambutt R."/>
            <person name="Korn B."/>
            <person name="Klein M."/>
            <person name="Poustka A."/>
        </authorList>
    </citation>
    <scope>NUCLEOTIDE SEQUENCE [LARGE SCALE MRNA] (ISOFORM 4)</scope>
    <source>
        <tissue>Brain</tissue>
    </source>
</reference>
<reference key="3">
    <citation type="journal article" date="2004" name="Nat. Genet.">
        <title>Complete sequencing and characterization of 21,243 full-length human cDNAs.</title>
        <authorList>
            <person name="Ota T."/>
            <person name="Suzuki Y."/>
            <person name="Nishikawa T."/>
            <person name="Otsuki T."/>
            <person name="Sugiyama T."/>
            <person name="Irie R."/>
            <person name="Wakamatsu A."/>
            <person name="Hayashi K."/>
            <person name="Sato H."/>
            <person name="Nagai K."/>
            <person name="Kimura K."/>
            <person name="Makita H."/>
            <person name="Sekine M."/>
            <person name="Obayashi M."/>
            <person name="Nishi T."/>
            <person name="Shibahara T."/>
            <person name="Tanaka T."/>
            <person name="Ishii S."/>
            <person name="Yamamoto J."/>
            <person name="Saito K."/>
            <person name="Kawai Y."/>
            <person name="Isono Y."/>
            <person name="Nakamura Y."/>
            <person name="Nagahari K."/>
            <person name="Murakami K."/>
            <person name="Yasuda T."/>
            <person name="Iwayanagi T."/>
            <person name="Wagatsuma M."/>
            <person name="Shiratori A."/>
            <person name="Sudo H."/>
            <person name="Hosoiri T."/>
            <person name="Kaku Y."/>
            <person name="Kodaira H."/>
            <person name="Kondo H."/>
            <person name="Sugawara M."/>
            <person name="Takahashi M."/>
            <person name="Kanda K."/>
            <person name="Yokoi T."/>
            <person name="Furuya T."/>
            <person name="Kikkawa E."/>
            <person name="Omura Y."/>
            <person name="Abe K."/>
            <person name="Kamihara K."/>
            <person name="Katsuta N."/>
            <person name="Sato K."/>
            <person name="Tanikawa M."/>
            <person name="Yamazaki M."/>
            <person name="Ninomiya K."/>
            <person name="Ishibashi T."/>
            <person name="Yamashita H."/>
            <person name="Murakawa K."/>
            <person name="Fujimori K."/>
            <person name="Tanai H."/>
            <person name="Kimata M."/>
            <person name="Watanabe M."/>
            <person name="Hiraoka S."/>
            <person name="Chiba Y."/>
            <person name="Ishida S."/>
            <person name="Ono Y."/>
            <person name="Takiguchi S."/>
            <person name="Watanabe S."/>
            <person name="Yosida M."/>
            <person name="Hotuta T."/>
            <person name="Kusano J."/>
            <person name="Kanehori K."/>
            <person name="Takahashi-Fujii A."/>
            <person name="Hara H."/>
            <person name="Tanase T.-O."/>
            <person name="Nomura Y."/>
            <person name="Togiya S."/>
            <person name="Komai F."/>
            <person name="Hara R."/>
            <person name="Takeuchi K."/>
            <person name="Arita M."/>
            <person name="Imose N."/>
            <person name="Musashino K."/>
            <person name="Yuuki H."/>
            <person name="Oshima A."/>
            <person name="Sasaki N."/>
            <person name="Aotsuka S."/>
            <person name="Yoshikawa Y."/>
            <person name="Matsunawa H."/>
            <person name="Ichihara T."/>
            <person name="Shiohata N."/>
            <person name="Sano S."/>
            <person name="Moriya S."/>
            <person name="Momiyama H."/>
            <person name="Satoh N."/>
            <person name="Takami S."/>
            <person name="Terashima Y."/>
            <person name="Suzuki O."/>
            <person name="Nakagawa S."/>
            <person name="Senoh A."/>
            <person name="Mizoguchi H."/>
            <person name="Goto Y."/>
            <person name="Shimizu F."/>
            <person name="Wakebe H."/>
            <person name="Hishigaki H."/>
            <person name="Watanabe T."/>
            <person name="Sugiyama A."/>
            <person name="Takemoto M."/>
            <person name="Kawakami B."/>
            <person name="Yamazaki M."/>
            <person name="Watanabe K."/>
            <person name="Kumagai A."/>
            <person name="Itakura S."/>
            <person name="Fukuzumi Y."/>
            <person name="Fujimori Y."/>
            <person name="Komiyama M."/>
            <person name="Tashiro H."/>
            <person name="Tanigami A."/>
            <person name="Fujiwara T."/>
            <person name="Ono T."/>
            <person name="Yamada K."/>
            <person name="Fujii Y."/>
            <person name="Ozaki K."/>
            <person name="Hirao M."/>
            <person name="Ohmori Y."/>
            <person name="Kawabata A."/>
            <person name="Hikiji T."/>
            <person name="Kobatake N."/>
            <person name="Inagaki H."/>
            <person name="Ikema Y."/>
            <person name="Okamoto S."/>
            <person name="Okitani R."/>
            <person name="Kawakami T."/>
            <person name="Noguchi S."/>
            <person name="Itoh T."/>
            <person name="Shigeta K."/>
            <person name="Senba T."/>
            <person name="Matsumura K."/>
            <person name="Nakajima Y."/>
            <person name="Mizuno T."/>
            <person name="Morinaga M."/>
            <person name="Sasaki M."/>
            <person name="Togashi T."/>
            <person name="Oyama M."/>
            <person name="Hata H."/>
            <person name="Watanabe M."/>
            <person name="Komatsu T."/>
            <person name="Mizushima-Sugano J."/>
            <person name="Satoh T."/>
            <person name="Shirai Y."/>
            <person name="Takahashi Y."/>
            <person name="Nakagawa K."/>
            <person name="Okumura K."/>
            <person name="Nagase T."/>
            <person name="Nomura N."/>
            <person name="Kikuchi H."/>
            <person name="Masuho Y."/>
            <person name="Yamashita R."/>
            <person name="Nakai K."/>
            <person name="Yada T."/>
            <person name="Nakamura Y."/>
            <person name="Ohara O."/>
            <person name="Isogai T."/>
            <person name="Sugano S."/>
        </authorList>
    </citation>
    <scope>NUCLEOTIDE SEQUENCE [LARGE SCALE MRNA] (ISOFORM 1)</scope>
    <source>
        <tissue>Teratocarcinoma</tissue>
    </source>
</reference>
<reference key="4">
    <citation type="submission" date="2004-06" db="EMBL/GenBank/DDBJ databases">
        <title>Cloning of human full open reading frames in Gateway(TM) system entry vector (pDONR201).</title>
        <authorList>
            <person name="Ebert L."/>
            <person name="Schick M."/>
            <person name="Neubert P."/>
            <person name="Schatten R."/>
            <person name="Henze S."/>
            <person name="Korn B."/>
        </authorList>
    </citation>
    <scope>NUCLEOTIDE SEQUENCE [LARGE SCALE MRNA] (ISOFORM 4)</scope>
</reference>
<reference key="5">
    <citation type="journal article" date="2006" name="Nature">
        <title>The DNA sequence and biological annotation of human chromosome 1.</title>
        <authorList>
            <person name="Gregory S.G."/>
            <person name="Barlow K.F."/>
            <person name="McLay K.E."/>
            <person name="Kaul R."/>
            <person name="Swarbreck D."/>
            <person name="Dunham A."/>
            <person name="Scott C.E."/>
            <person name="Howe K.L."/>
            <person name="Woodfine K."/>
            <person name="Spencer C.C.A."/>
            <person name="Jones M.C."/>
            <person name="Gillson C."/>
            <person name="Searle S."/>
            <person name="Zhou Y."/>
            <person name="Kokocinski F."/>
            <person name="McDonald L."/>
            <person name="Evans R."/>
            <person name="Phillips K."/>
            <person name="Atkinson A."/>
            <person name="Cooper R."/>
            <person name="Jones C."/>
            <person name="Hall R.E."/>
            <person name="Andrews T.D."/>
            <person name="Lloyd C."/>
            <person name="Ainscough R."/>
            <person name="Almeida J.P."/>
            <person name="Ambrose K.D."/>
            <person name="Anderson F."/>
            <person name="Andrew R.W."/>
            <person name="Ashwell R.I.S."/>
            <person name="Aubin K."/>
            <person name="Babbage A.K."/>
            <person name="Bagguley C.L."/>
            <person name="Bailey J."/>
            <person name="Beasley H."/>
            <person name="Bethel G."/>
            <person name="Bird C.P."/>
            <person name="Bray-Allen S."/>
            <person name="Brown J.Y."/>
            <person name="Brown A.J."/>
            <person name="Buckley D."/>
            <person name="Burton J."/>
            <person name="Bye J."/>
            <person name="Carder C."/>
            <person name="Chapman J.C."/>
            <person name="Clark S.Y."/>
            <person name="Clarke G."/>
            <person name="Clee C."/>
            <person name="Cobley V."/>
            <person name="Collier R.E."/>
            <person name="Corby N."/>
            <person name="Coville G.J."/>
            <person name="Davies J."/>
            <person name="Deadman R."/>
            <person name="Dunn M."/>
            <person name="Earthrowl M."/>
            <person name="Ellington A.G."/>
            <person name="Errington H."/>
            <person name="Frankish A."/>
            <person name="Frankland J."/>
            <person name="French L."/>
            <person name="Garner P."/>
            <person name="Garnett J."/>
            <person name="Gay L."/>
            <person name="Ghori M.R.J."/>
            <person name="Gibson R."/>
            <person name="Gilby L.M."/>
            <person name="Gillett W."/>
            <person name="Glithero R.J."/>
            <person name="Grafham D.V."/>
            <person name="Griffiths C."/>
            <person name="Griffiths-Jones S."/>
            <person name="Grocock R."/>
            <person name="Hammond S."/>
            <person name="Harrison E.S.I."/>
            <person name="Hart E."/>
            <person name="Haugen E."/>
            <person name="Heath P.D."/>
            <person name="Holmes S."/>
            <person name="Holt K."/>
            <person name="Howden P.J."/>
            <person name="Hunt A.R."/>
            <person name="Hunt S.E."/>
            <person name="Hunter G."/>
            <person name="Isherwood J."/>
            <person name="James R."/>
            <person name="Johnson C."/>
            <person name="Johnson D."/>
            <person name="Joy A."/>
            <person name="Kay M."/>
            <person name="Kershaw J.K."/>
            <person name="Kibukawa M."/>
            <person name="Kimberley A.M."/>
            <person name="King A."/>
            <person name="Knights A.J."/>
            <person name="Lad H."/>
            <person name="Laird G."/>
            <person name="Lawlor S."/>
            <person name="Leongamornlert D.A."/>
            <person name="Lloyd D.M."/>
            <person name="Loveland J."/>
            <person name="Lovell J."/>
            <person name="Lush M.J."/>
            <person name="Lyne R."/>
            <person name="Martin S."/>
            <person name="Mashreghi-Mohammadi M."/>
            <person name="Matthews L."/>
            <person name="Matthews N.S.W."/>
            <person name="McLaren S."/>
            <person name="Milne S."/>
            <person name="Mistry S."/>
            <person name="Moore M.J.F."/>
            <person name="Nickerson T."/>
            <person name="O'Dell C.N."/>
            <person name="Oliver K."/>
            <person name="Palmeiri A."/>
            <person name="Palmer S.A."/>
            <person name="Parker A."/>
            <person name="Patel D."/>
            <person name="Pearce A.V."/>
            <person name="Peck A.I."/>
            <person name="Pelan S."/>
            <person name="Phelps K."/>
            <person name="Phillimore B.J."/>
            <person name="Plumb R."/>
            <person name="Rajan J."/>
            <person name="Raymond C."/>
            <person name="Rouse G."/>
            <person name="Saenphimmachak C."/>
            <person name="Sehra H.K."/>
            <person name="Sheridan E."/>
            <person name="Shownkeen R."/>
            <person name="Sims S."/>
            <person name="Skuce C.D."/>
            <person name="Smith M."/>
            <person name="Steward C."/>
            <person name="Subramanian S."/>
            <person name="Sycamore N."/>
            <person name="Tracey A."/>
            <person name="Tromans A."/>
            <person name="Van Helmond Z."/>
            <person name="Wall M."/>
            <person name="Wallis J.M."/>
            <person name="White S."/>
            <person name="Whitehead S.L."/>
            <person name="Wilkinson J.E."/>
            <person name="Willey D.L."/>
            <person name="Williams H."/>
            <person name="Wilming L."/>
            <person name="Wray P.W."/>
            <person name="Wu Z."/>
            <person name="Coulson A."/>
            <person name="Vaudin M."/>
            <person name="Sulston J.E."/>
            <person name="Durbin R.M."/>
            <person name="Hubbard T."/>
            <person name="Wooster R."/>
            <person name="Dunham I."/>
            <person name="Carter N.P."/>
            <person name="McVean G."/>
            <person name="Ross M.T."/>
            <person name="Harrow J."/>
            <person name="Olson M.V."/>
            <person name="Beck S."/>
            <person name="Rogers J."/>
            <person name="Bentley D.R."/>
        </authorList>
    </citation>
    <scope>NUCLEOTIDE SEQUENCE [LARGE SCALE GENOMIC DNA]</scope>
</reference>
<reference key="6">
    <citation type="journal article" date="2004" name="Genome Res.">
        <title>The status, quality, and expansion of the NIH full-length cDNA project: the Mammalian Gene Collection (MGC).</title>
        <authorList>
            <consortium name="The MGC Project Team"/>
        </authorList>
    </citation>
    <scope>NUCLEOTIDE SEQUENCE [LARGE SCALE MRNA] (ISOFORMS 1; 2 AND 4)</scope>
    <source>
        <tissue>Colon</tissue>
        <tissue>Lung</tissue>
        <tissue>Placenta</tissue>
        <tissue>Prostate</tissue>
        <tissue>Skin</tissue>
    </source>
</reference>
<reference key="7">
    <citation type="submission" date="2004-01" db="UniProtKB">
        <authorList>
            <person name="Bienvenut W.V."/>
        </authorList>
    </citation>
    <scope>PROTEIN SEQUENCE OF 40-52; 137-145; 287-294 AND 304-309</scope>
    <scope>IDENTIFICATION BY MASS SPECTROMETRY</scope>
    <source>
        <tissue>B-cell lymphoma</tissue>
    </source>
</reference>
<reference key="8">
    <citation type="submission" date="2009-03" db="UniProtKB">
        <authorList>
            <person name="Bienvenut W.V."/>
            <person name="Waridel P."/>
            <person name="Quadroni M."/>
        </authorList>
    </citation>
    <scope>PROTEIN SEQUENCE OF 2-32; 93-103; 146-160; 217-236; 274-286; 304-309 AND 328-364</scope>
    <scope>CLEAVAGE OF INITIATOR METHIONINE</scope>
    <scope>IDENTIFICATION BY MASS SPECTROMETRY</scope>
    <source>
        <tissue>Cervix carcinoma</tissue>
    </source>
</reference>
<reference key="9">
    <citation type="submission" date="2001-04" db="EMBL/GenBank/DDBJ databases">
        <title>Homo sapiens CGI-55 protein mRNA.</title>
        <authorList>
            <person name="Spiridonov N.A."/>
            <person name="Wong L."/>
            <person name="Johnson G.R."/>
        </authorList>
    </citation>
    <scope>NUCLEOTIDE SEQUENCE [MRNA] OF 85-408 (ISOFORM 3)</scope>
</reference>
<reference key="10">
    <citation type="journal article" date="2003" name="FEBS Lett.">
        <title>Characterization of a new family of proteins that interact with the C-terminal region of the chromatin-remodeling factor CHD-3.</title>
        <authorList>
            <person name="Lemos T.A."/>
            <person name="Passos D.O."/>
            <person name="Nery F.C."/>
            <person name="Kobarg J."/>
        </authorList>
    </citation>
    <scope>TISSUE SPECIFICITY</scope>
    <scope>SUBCELLULAR LOCATION</scope>
    <scope>INTERACTION WITH CHD3</scope>
</reference>
<reference key="11">
    <citation type="journal article" date="2001" name="J. Biol. Chem.">
        <title>Identification and cDNA cloning of a novel RNA-binding protein that interacts with the cyclic nucleotide-responsive sequence in the type-1 plasminogen activator inhibitor mRNA.</title>
        <authorList>
            <person name="Heaton J.H."/>
            <person name="Dlakic W.M."/>
            <person name="Dlakic M."/>
            <person name="Gelehrter T.D."/>
        </authorList>
    </citation>
    <scope>INTERACTION WITH SERPINE1 MRNA</scope>
    <scope>FUNCTION</scope>
</reference>
<reference key="12">
    <citation type="journal article" date="2003" name="Nature">
        <title>Proteomic characterization of the human centrosome by protein correlation profiling.</title>
        <authorList>
            <person name="Andersen J.S."/>
            <person name="Wilkinson C.J."/>
            <person name="Mayor T."/>
            <person name="Mortensen P."/>
            <person name="Nigg E.A."/>
            <person name="Mann M."/>
        </authorList>
    </citation>
    <scope>IDENTIFICATION BY MASS SPECTROMETRY</scope>
    <source>
        <tissue>Lymphoblast</tissue>
    </source>
</reference>
<reference key="13">
    <citation type="journal article" date="2006" name="Cell">
        <title>Global, in vivo, and site-specific phosphorylation dynamics in signaling networks.</title>
        <authorList>
            <person name="Olsen J.V."/>
            <person name="Blagoev B."/>
            <person name="Gnad F."/>
            <person name="Macek B."/>
            <person name="Kumar C."/>
            <person name="Mortensen P."/>
            <person name="Mann M."/>
        </authorList>
    </citation>
    <scope>PHOSPHORYLATION [LARGE SCALE ANALYSIS] AT SER-237 (ISOFORM 3)</scope>
    <scope>PHOSPHORYLATION [LARGE SCALE ANALYSIS] AT SER-231 (ISOFORM 4)</scope>
    <scope>IDENTIFICATION BY MASS SPECTROMETRY [LARGE SCALE ANALYSIS]</scope>
    <source>
        <tissue>Cervix carcinoma</tissue>
    </source>
</reference>
<reference key="14">
    <citation type="journal article" date="2007" name="J. Proteome Res.">
        <title>Improved titanium dioxide enrichment of phosphopeptides from HeLa cells and high confident phosphopeptide identification by cross-validation of MS/MS and MS/MS/MS spectra.</title>
        <authorList>
            <person name="Yu L.R."/>
            <person name="Zhu Z."/>
            <person name="Chan K.C."/>
            <person name="Issaq H.J."/>
            <person name="Dimitrov D.S."/>
            <person name="Veenstra T.D."/>
        </authorList>
    </citation>
    <scope>IDENTIFICATION BY MASS SPECTROMETRY [LARGE SCALE ANALYSIS]</scope>
    <source>
        <tissue>Cervix carcinoma</tissue>
    </source>
</reference>
<reference key="15">
    <citation type="journal article" date="2008" name="Hum. Mol. Genet.">
        <title>TDRD3, a novel Tudor domain-containing protein, localizes to cytoplasmic stress granules.</title>
        <authorList>
            <person name="Goulet I."/>
            <person name="Boisvenue S."/>
            <person name="Mokas S."/>
            <person name="Mazroui R."/>
            <person name="Cote J."/>
        </authorList>
    </citation>
    <scope>INTERACTION WITH TDRD3</scope>
</reference>
<reference key="16">
    <citation type="journal article" date="2008" name="Proc. Natl. Acad. Sci. U.S.A.">
        <title>A quantitative atlas of mitotic phosphorylation.</title>
        <authorList>
            <person name="Dephoure N."/>
            <person name="Zhou C."/>
            <person name="Villen J."/>
            <person name="Beausoleil S.A."/>
            <person name="Bakalarski C.E."/>
            <person name="Elledge S.J."/>
            <person name="Gygi S.P."/>
        </authorList>
    </citation>
    <scope>PHOSPHORYLATION [LARGE SCALE ANALYSIS] AT SER-234; SER-330 AND SER-394</scope>
    <scope>PHOSPHORYLATION [LARGE SCALE ANALYSIS] AT SER-237 AND THR-240 (ISOFORM 3)</scope>
    <scope>PHOSPHORYLATION [LARGE SCALE ANALYSIS] AT SER-231 AND THR-234 (ISOFORM 4)</scope>
    <scope>IDENTIFICATION BY MASS SPECTROMETRY [LARGE SCALE ANALYSIS]</scope>
    <source>
        <tissue>Cervix carcinoma</tissue>
    </source>
</reference>
<reference key="17">
    <citation type="journal article" date="2009" name="Anal. Chem.">
        <title>Lys-N and trypsin cover complementary parts of the phosphoproteome in a refined SCX-based approach.</title>
        <authorList>
            <person name="Gauci S."/>
            <person name="Helbig A.O."/>
            <person name="Slijper M."/>
            <person name="Krijgsveld J."/>
            <person name="Heck A.J."/>
            <person name="Mohammed S."/>
        </authorList>
    </citation>
    <scope>IDENTIFICATION BY MASS SPECTROMETRY [LARGE SCALE ANALYSIS]</scope>
</reference>
<reference key="18">
    <citation type="journal article" date="2009" name="Sci. Signal.">
        <title>Quantitative phosphoproteomic analysis of T cell receptor signaling reveals system-wide modulation of protein-protein interactions.</title>
        <authorList>
            <person name="Mayya V."/>
            <person name="Lundgren D.H."/>
            <person name="Hwang S.-I."/>
            <person name="Rezaul K."/>
            <person name="Wu L."/>
            <person name="Eng J.K."/>
            <person name="Rodionov V."/>
            <person name="Han D.K."/>
        </authorList>
    </citation>
    <scope>PHOSPHORYLATION [LARGE SCALE ANALYSIS] AT SER-25; SER-234; SER-392 AND SER-394</scope>
    <scope>IDENTIFICATION BY MASS SPECTROMETRY [LARGE SCALE ANALYSIS]</scope>
    <source>
        <tissue>Leukemic T-cell</tissue>
    </source>
</reference>
<reference key="19">
    <citation type="journal article" date="2009" name="Science">
        <title>Lysine acetylation targets protein complexes and co-regulates major cellular functions.</title>
        <authorList>
            <person name="Choudhary C."/>
            <person name="Kumar C."/>
            <person name="Gnad F."/>
            <person name="Nielsen M.L."/>
            <person name="Rehman M."/>
            <person name="Walther T.C."/>
            <person name="Olsen J.V."/>
            <person name="Mann M."/>
        </authorList>
    </citation>
    <scope>ACETYLATION [LARGE SCALE ANALYSIS] AT LYS-68; LYS-122; LYS-140 AND LYS-211</scope>
    <scope>IDENTIFICATION BY MASS SPECTROMETRY [LARGE SCALE ANALYSIS]</scope>
</reference>
<reference key="20">
    <citation type="journal article" date="2011" name="BMC Syst. Biol.">
        <title>Initial characterization of the human central proteome.</title>
        <authorList>
            <person name="Burkard T.R."/>
            <person name="Planyavsky M."/>
            <person name="Kaupe I."/>
            <person name="Breitwieser F.P."/>
            <person name="Buerckstuemmer T."/>
            <person name="Bennett K.L."/>
            <person name="Superti-Furga G."/>
            <person name="Colinge J."/>
        </authorList>
    </citation>
    <scope>IDENTIFICATION BY MASS SPECTROMETRY [LARGE SCALE ANALYSIS]</scope>
</reference>
<reference key="21">
    <citation type="journal article" date="2013" name="J. Proteome Res.">
        <title>Toward a comprehensive characterization of a human cancer cell phosphoproteome.</title>
        <authorList>
            <person name="Zhou H."/>
            <person name="Di Palma S."/>
            <person name="Preisinger C."/>
            <person name="Peng M."/>
            <person name="Polat A.N."/>
            <person name="Heck A.J."/>
            <person name="Mohammed S."/>
        </authorList>
    </citation>
    <scope>PHOSPHORYLATION [LARGE SCALE ANALYSIS] AT SER-25; SER-203; SER-205; SER-208; SER-221; SER-234; SER-330 AND SER-392</scope>
    <scope>IDENTIFICATION BY MASS SPECTROMETRY [LARGE SCALE ANALYSIS]</scope>
    <source>
        <tissue>Cervix carcinoma</tissue>
        <tissue>Erythroleukemia</tissue>
    </source>
</reference>
<reference key="22">
    <citation type="journal article" date="2014" name="J. Proteomics">
        <title>An enzyme assisted RP-RPLC approach for in-depth analysis of human liver phosphoproteome.</title>
        <authorList>
            <person name="Bian Y."/>
            <person name="Song C."/>
            <person name="Cheng K."/>
            <person name="Dong M."/>
            <person name="Wang F."/>
            <person name="Huang J."/>
            <person name="Sun D."/>
            <person name="Wang L."/>
            <person name="Ye M."/>
            <person name="Zou H."/>
        </authorList>
    </citation>
    <scope>PHOSPHORYLATION [LARGE SCALE ANALYSIS] AT SER-25; SER-330 AND SER-394</scope>
    <scope>IDENTIFICATION BY MASS SPECTROMETRY [LARGE SCALE ANALYSIS]</scope>
    <source>
        <tissue>Liver</tissue>
    </source>
</reference>
<reference key="23">
    <citation type="journal article" date="2014" name="Mol. Cell. Proteomics">
        <title>Immunoaffinity enrichment and mass spectrometry analysis of protein methylation.</title>
        <authorList>
            <person name="Guo A."/>
            <person name="Gu H."/>
            <person name="Zhou J."/>
            <person name="Mulhern D."/>
            <person name="Wang Y."/>
            <person name="Lee K.A."/>
            <person name="Yang V."/>
            <person name="Aguiar M."/>
            <person name="Kornhauser J."/>
            <person name="Jia X."/>
            <person name="Ren J."/>
            <person name="Beausoleil S.A."/>
            <person name="Silva J.C."/>
            <person name="Vemulapalli V."/>
            <person name="Bedford M.T."/>
            <person name="Comb M.J."/>
        </authorList>
    </citation>
    <scope>METHYLATION [LARGE SCALE ANALYSIS] AT ARG-216; ARG-364; ARG-367 AND ARG-370</scope>
    <scope>IDENTIFICATION BY MASS SPECTROMETRY [LARGE SCALE ANALYSIS]</scope>
    <source>
        <tissue>Colon carcinoma</tissue>
    </source>
</reference>
<reference key="24">
    <citation type="journal article" date="2014" name="Nat. Struct. Mol. Biol.">
        <title>Uncovering global SUMOylation signaling networks in a site-specific manner.</title>
        <authorList>
            <person name="Hendriks I.A."/>
            <person name="D'Souza R.C."/>
            <person name="Yang B."/>
            <person name="Verlaan-de Vries M."/>
            <person name="Mann M."/>
            <person name="Vertegaal A.C."/>
        </authorList>
    </citation>
    <scope>SUMOYLATION [LARGE SCALE ANALYSIS] AT LYS-102 AND LYS-281</scope>
    <scope>IDENTIFICATION BY MASS SPECTROMETRY [LARGE SCALE ANALYSIS]</scope>
</reference>
<reference key="25">
    <citation type="journal article" date="2014" name="Proc. Natl. Acad. Sci. U.S.A.">
        <title>Mapping of SUMO sites and analysis of SUMOylation changes induced by external stimuli.</title>
        <authorList>
            <person name="Impens F."/>
            <person name="Radoshevich L."/>
            <person name="Cossart P."/>
            <person name="Ribet D."/>
        </authorList>
    </citation>
    <scope>SUMOYLATION [LARGE SCALE ANALYSIS] AT LYS-52 AND LYS-228</scope>
    <scope>IDENTIFICATION BY MASS SPECTROMETRY [LARGE SCALE ANALYSIS]</scope>
</reference>
<reference key="26">
    <citation type="journal article" date="2015" name="Cell Rep.">
        <title>SUMO-2 orchestrates chromatin modifiers in response to DNA damage.</title>
        <authorList>
            <person name="Hendriks I.A."/>
            <person name="Treffers L.W."/>
            <person name="Verlaan-de Vries M."/>
            <person name="Olsen J.V."/>
            <person name="Vertegaal A.C."/>
        </authorList>
    </citation>
    <scope>SUMOYLATION [LARGE SCALE ANALYSIS] AT LYS-102 AND LYS-228</scope>
    <scope>IDENTIFICATION BY MASS SPECTROMETRY [LARGE SCALE ANALYSIS]</scope>
</reference>
<reference key="27">
    <citation type="journal article" date="2015" name="Mol. Cell. Proteomics">
        <title>System-wide analysis of SUMOylation dynamics in response to replication stress reveals novel small ubiquitin-like modified target proteins and acceptor lysines relevant for genome stability.</title>
        <authorList>
            <person name="Xiao Z."/>
            <person name="Chang J.G."/>
            <person name="Hendriks I.A."/>
            <person name="Sigurdsson J.O."/>
            <person name="Olsen J.V."/>
            <person name="Vertegaal A.C."/>
        </authorList>
    </citation>
    <scope>SUMOYLATION [LARGE SCALE ANALYSIS] AT LYS-102 AND LYS-228</scope>
    <scope>IDENTIFICATION BY MASS SPECTROMETRY [LARGE SCALE ANALYSIS]</scope>
</reference>
<reference key="28">
    <citation type="journal article" date="2015" name="Proteomics">
        <title>N-terminome analysis of the human mitochondrial proteome.</title>
        <authorList>
            <person name="Vaca Jacome A.S."/>
            <person name="Rabilloud T."/>
            <person name="Schaeffer-Reiss C."/>
            <person name="Rompais M."/>
            <person name="Ayoub D."/>
            <person name="Lane L."/>
            <person name="Bairoch A."/>
            <person name="Van Dorsselaer A."/>
            <person name="Carapito C."/>
        </authorList>
    </citation>
    <scope>CLEAVAGE OF INITIATOR METHIONINE [LARGE SCALE ANALYSIS]</scope>
    <scope>IDENTIFICATION BY MASS SPECTROMETRY [LARGE SCALE ANALYSIS]</scope>
</reference>
<reference key="29">
    <citation type="journal article" date="2017" name="J. Biol. Chem.">
        <title>Peptide array based screening reveals a large number of proteins interacting with the ankyrin repeat domain of the zDHHC17 S-acyltransferase.</title>
        <authorList>
            <person name="Lemonidis K."/>
            <person name="MacLeod R."/>
            <person name="Baillie G.S."/>
            <person name="Chamberlain L.H."/>
        </authorList>
    </citation>
    <scope>INTERACTION WITH ZDHHC17</scope>
</reference>
<reference key="30">
    <citation type="journal article" date="2017" name="J. Proteome Res.">
        <title>Human Regulatory Protein Ki-1/57 Is a Target of SUMOylation and Affects PML Nuclear Body Formation.</title>
        <authorList>
            <person name="Saito A."/>
            <person name="Souza E.E."/>
            <person name="Costa F.C."/>
            <person name="Meirelles G.V."/>
            <person name="Goncalves K.A."/>
            <person name="Santos M.T."/>
            <person name="Bressan G.C."/>
            <person name="McComb M.E."/>
            <person name="Costello C.E."/>
            <person name="Whelan S.A."/>
            <person name="Kobarg J."/>
        </authorList>
    </citation>
    <scope>SUMOYLATION AT LYS-102; LYS-228 AND LYS-281</scope>
    <scope>MUTAGENESIS OF LYS-102; LYS-228 AND LYS-281</scope>
    <scope>SUBCELLULAR LOCATION</scope>
</reference>
<reference key="31">
    <citation type="journal article" date="2017" name="Nat. Struct. Mol. Biol.">
        <title>Site-specific mapping of the human SUMO proteome reveals co-modification with phosphorylation.</title>
        <authorList>
            <person name="Hendriks I.A."/>
            <person name="Lyon D."/>
            <person name="Young C."/>
            <person name="Jensen L.J."/>
            <person name="Vertegaal A.C."/>
            <person name="Nielsen M.L."/>
        </authorList>
    </citation>
    <scope>SUMOYLATION [LARGE SCALE ANALYSIS] AT LYS-102; LYS-211; LYS-228 AND LYS-281</scope>
    <scope>SUMOYLATION [LARGE SCALE ANALYSIS] AT LYS-228 (ISOFORM 3)</scope>
    <scope>SUMOYLATION [LARGE SCALE ANALYSIS] AT LYS-222 (ISOFORM 4)</scope>
    <scope>IDENTIFICATION BY MASS SPECTROMETRY [LARGE SCALE ANALYSIS]</scope>
</reference>
<reference key="32">
    <citation type="journal article" date="2023" name="EMBO J.">
        <title>TORC1 phosphorylates and inhibits the ribosome preservation factor Stm1 to activate dormant ribosomes.</title>
        <authorList>
            <person name="Shetty S."/>
            <person name="Hofstetter J."/>
            <person name="Battaglioni S."/>
            <person name="Ritz D."/>
            <person name="Hall M.N."/>
        </authorList>
    </citation>
    <scope>FUNCTION</scope>
    <scope>RIBOSOME-BINDING</scope>
    <scope>PHOSPHORYLATION</scope>
    <scope>PHOSPHORYLATION AT SER-25; SER-197; SER-199; THR-226 AND SER-234</scope>
</reference>
<reference key="33">
    <citation type="journal article" date="2013" name="Nature">
        <title>Structures of the human and Drosophila 80S ribosome.</title>
        <authorList>
            <person name="Anger A.M."/>
            <person name="Armache J.P."/>
            <person name="Berninghausen O."/>
            <person name="Habeck M."/>
            <person name="Subklewe M."/>
            <person name="Wilson D.N."/>
            <person name="Beckmann R."/>
        </authorList>
    </citation>
    <scope>STRUCTURE BY ELECTRON MICROSCOPY (5.0 ANGSTROMS) IN COMPLEX WITH 80S RIBOSOME</scope>
    <scope>RIBOSOME-BINDING</scope>
</reference>
<reference key="34">
    <citation type="journal article" date="2020" name="PLoS Biol.">
        <title>Structure and function of yeast Lso2 and human CCDC124 bound to hibernating ribosomes.</title>
        <authorList>
            <person name="Wells J.N."/>
            <person name="Buschauer R."/>
            <person name="Mackens-Kiani T."/>
            <person name="Best K."/>
            <person name="Kratzat H."/>
            <person name="Berninghausen O."/>
            <person name="Becker T."/>
            <person name="Gilbert W."/>
            <person name="Cheng J."/>
            <person name="Beckmann R."/>
        </authorList>
    </citation>
    <scope>STRUCTURE BY ELECTRON MICROSCOPY (3.00 ANGSTROMS) IN COMPLEX WITH RIBOSOME</scope>
    <scope>RIBOSOME-BINDING</scope>
</reference>
<evidence type="ECO:0000250" key="1">
    <source>
        <dbReference type="UniProtKB" id="Q9CY58"/>
    </source>
</evidence>
<evidence type="ECO:0000256" key="2">
    <source>
        <dbReference type="SAM" id="MobiDB-lite"/>
    </source>
</evidence>
<evidence type="ECO:0000269" key="3">
    <source>
    </source>
</evidence>
<evidence type="ECO:0000269" key="4">
    <source>
    </source>
</evidence>
<evidence type="ECO:0000269" key="5">
    <source>
    </source>
</evidence>
<evidence type="ECO:0000269" key="6">
    <source>
    </source>
</evidence>
<evidence type="ECO:0000269" key="7">
    <source>
    </source>
</evidence>
<evidence type="ECO:0000269" key="8">
    <source>
    </source>
</evidence>
<evidence type="ECO:0000269" key="9">
    <source>
    </source>
</evidence>
<evidence type="ECO:0000269" key="10">
    <source>
    </source>
</evidence>
<evidence type="ECO:0000269" key="11">
    <source ref="8"/>
</evidence>
<evidence type="ECO:0000303" key="12">
    <source>
    </source>
</evidence>
<evidence type="ECO:0000303" key="13">
    <source>
    </source>
</evidence>
<evidence type="ECO:0000303" key="14">
    <source>
    </source>
</evidence>
<evidence type="ECO:0000303" key="15">
    <source>
    </source>
</evidence>
<evidence type="ECO:0000303" key="16">
    <source>
    </source>
</evidence>
<evidence type="ECO:0000303" key="17">
    <source ref="4"/>
</evidence>
<evidence type="ECO:0000303" key="18">
    <source ref="9"/>
</evidence>
<evidence type="ECO:0000305" key="19"/>
<evidence type="ECO:0000312" key="20">
    <source>
        <dbReference type="HGNC" id="HGNC:17860"/>
    </source>
</evidence>
<evidence type="ECO:0007744" key="21">
    <source>
    </source>
</evidence>
<evidence type="ECO:0007744" key="22">
    <source>
    </source>
</evidence>
<evidence type="ECO:0007744" key="23">
    <source>
    </source>
</evidence>
<evidence type="ECO:0007744" key="24">
    <source>
    </source>
</evidence>
<evidence type="ECO:0007744" key="25">
    <source>
    </source>
</evidence>
<evidence type="ECO:0007744" key="26">
    <source>
    </source>
</evidence>
<evidence type="ECO:0007744" key="27">
    <source>
    </source>
</evidence>
<evidence type="ECO:0007744" key="28">
    <source>
    </source>
</evidence>
<evidence type="ECO:0007744" key="29">
    <source>
    </source>
</evidence>
<evidence type="ECO:0007744" key="30">
    <source>
    </source>
</evidence>
<evidence type="ECO:0007744" key="31">
    <source>
    </source>
</evidence>
<evidence type="ECO:0007744" key="32">
    <source>
    </source>
</evidence>
<evidence type="ECO:0007744" key="33">
    <source>
    </source>
</evidence>
<feature type="initiator methionine" description="Removed" evidence="11 32">
    <location>
        <position position="1"/>
    </location>
</feature>
<feature type="chain" id="PRO_0000058182" description="SERPINE1 mRNA-binding protein 1">
    <location>
        <begin position="2"/>
        <end position="408"/>
    </location>
</feature>
<feature type="region of interest" description="Disordered" evidence="2">
    <location>
        <begin position="33"/>
        <end position="292"/>
    </location>
</feature>
<feature type="region of interest" description="Disordered" evidence="2">
    <location>
        <begin position="328"/>
        <end position="408"/>
    </location>
</feature>
<feature type="compositionally biased region" description="Low complexity" evidence="2">
    <location>
        <begin position="51"/>
        <end position="68"/>
    </location>
</feature>
<feature type="compositionally biased region" description="Basic and acidic residues" evidence="2">
    <location>
        <begin position="70"/>
        <end position="80"/>
    </location>
</feature>
<feature type="compositionally biased region" description="Basic and acidic residues" evidence="2">
    <location>
        <begin position="89"/>
        <end position="114"/>
    </location>
</feature>
<feature type="compositionally biased region" description="Basic and acidic residues" evidence="2">
    <location>
        <begin position="122"/>
        <end position="162"/>
    </location>
</feature>
<feature type="compositionally biased region" description="Gly residues" evidence="2">
    <location>
        <begin position="164"/>
        <end position="182"/>
    </location>
</feature>
<feature type="compositionally biased region" description="Basic and acidic residues" evidence="2">
    <location>
        <begin position="183"/>
        <end position="199"/>
    </location>
</feature>
<feature type="compositionally biased region" description="Polar residues" evidence="2">
    <location>
        <begin position="240"/>
        <end position="253"/>
    </location>
</feature>
<feature type="compositionally biased region" description="Basic and acidic residues" evidence="2">
    <location>
        <begin position="261"/>
        <end position="275"/>
    </location>
</feature>
<feature type="compositionally biased region" description="Basic and acidic residues" evidence="2">
    <location>
        <begin position="282"/>
        <end position="292"/>
    </location>
</feature>
<feature type="compositionally biased region" description="Basic and acidic residues" evidence="2">
    <location>
        <begin position="328"/>
        <end position="342"/>
    </location>
</feature>
<feature type="compositionally biased region" description="Gly residues" evidence="2">
    <location>
        <begin position="363"/>
        <end position="372"/>
    </location>
</feature>
<feature type="modified residue" description="Phosphoserine" evidence="10 24 25 27">
    <location>
        <position position="25"/>
    </location>
</feature>
<feature type="modified residue" description="N6-acetyllysine; alternate" evidence="1">
    <location>
        <position position="52"/>
    </location>
</feature>
<feature type="modified residue" description="N6-acetyllysine" evidence="23">
    <location>
        <position position="68"/>
    </location>
</feature>
<feature type="modified residue" description="N6-acetyllysine" evidence="23">
    <location>
        <position position="122"/>
    </location>
</feature>
<feature type="modified residue" description="N6-acetyllysine" evidence="23">
    <location>
        <position position="140"/>
    </location>
</feature>
<feature type="modified residue" description="Omega-N-methylarginine" evidence="1">
    <location>
        <position position="165"/>
    </location>
</feature>
<feature type="modified residue" description="Omega-N-methylarginine" evidence="1">
    <location>
        <position position="188"/>
    </location>
</feature>
<feature type="modified residue" description="Phosphoserine" evidence="10">
    <location>
        <position position="197"/>
    </location>
</feature>
<feature type="modified residue" description="Phosphoserine; by MTOR" evidence="10">
    <location>
        <position position="199"/>
    </location>
</feature>
<feature type="modified residue" description="Phosphoserine" evidence="25">
    <location>
        <position position="203"/>
    </location>
</feature>
<feature type="modified residue" description="Phosphoserine" evidence="25">
    <location>
        <position position="205"/>
    </location>
</feature>
<feature type="modified residue" description="Phosphoserine" evidence="25">
    <location>
        <position position="208"/>
    </location>
</feature>
<feature type="modified residue" description="N6-acetyllysine; alternate" evidence="23">
    <location>
        <position position="211"/>
    </location>
</feature>
<feature type="modified residue" description="Omega-N-methylarginine" evidence="26">
    <location>
        <position position="216"/>
    </location>
</feature>
<feature type="modified residue" description="Phosphoserine" evidence="25">
    <location>
        <position position="221"/>
    </location>
</feature>
<feature type="modified residue" description="Phosphothreonine; by MTOR" evidence="10">
    <location>
        <position position="226"/>
    </location>
</feature>
<feature type="modified residue" description="Phosphoserine" evidence="10 22 24 25">
    <location>
        <position position="234"/>
    </location>
</feature>
<feature type="modified residue" description="N6-acetyllysine" evidence="1">
    <location>
        <position position="329"/>
    </location>
</feature>
<feature type="modified residue" description="Phosphoserine" evidence="22 25 27">
    <location>
        <position position="330"/>
    </location>
</feature>
<feature type="modified residue" description="Omega-N-methylarginine" evidence="26">
    <location>
        <position position="364"/>
    </location>
</feature>
<feature type="modified residue" description="Omega-N-methylarginine" evidence="26">
    <location>
        <position position="367"/>
    </location>
</feature>
<feature type="modified residue" description="Omega-N-methylarginine" evidence="26">
    <location>
        <position position="370"/>
    </location>
</feature>
<feature type="modified residue" description="Phosphoserine" evidence="24 25">
    <location>
        <position position="392"/>
    </location>
</feature>
<feature type="modified residue" description="Phosphoserine" evidence="22 24 27">
    <location>
        <position position="394"/>
    </location>
</feature>
<feature type="cross-link" description="Glycyl lysine isopeptide (Lys-Gly) (interchain with G-Cter in SUMO1); alternate" evidence="28">
    <location>
        <position position="52"/>
    </location>
</feature>
<feature type="cross-link" description="Glycyl lysine isopeptide (Lys-Gly) (interchain with G-Cter in SUMO1); alternate" evidence="7">
    <location>
        <position position="102"/>
    </location>
</feature>
<feature type="cross-link" description="Glycyl lysine isopeptide (Lys-Gly) (interchain with G-Cter in SUMO2); alternate" evidence="29 30 31 33">
    <location>
        <position position="102"/>
    </location>
</feature>
<feature type="cross-link" description="Glycyl lysine isopeptide (Lys-Gly) (interchain with G-Cter in SUMO2); alternate" evidence="33">
    <location>
        <position position="211"/>
    </location>
</feature>
<feature type="cross-link" description="Glycyl lysine isopeptide (Lys-Gly) (interchain with G-Cter in SUMO1); alternate" evidence="7 28">
    <location>
        <position position="228"/>
    </location>
</feature>
<feature type="cross-link" description="Glycyl lysine isopeptide (Lys-Gly) (interchain with G-Cter in SUMO2); alternate" evidence="28 30 31 33">
    <location>
        <position position="228"/>
    </location>
</feature>
<feature type="cross-link" description="Glycyl lysine isopeptide (Lys-Gly) (interchain with G-Cter in SUMO1); alternate" evidence="7">
    <location>
        <position position="281"/>
    </location>
</feature>
<feature type="cross-link" description="Glycyl lysine isopeptide (Lys-Gly) (interchain with G-Cter in SUMO2); alternate" evidence="29 33">
    <location>
        <position position="281"/>
    </location>
</feature>
<feature type="splice variant" id="VSP_011630" description="In isoform 2 and isoform 4." evidence="13 14 17">
    <location>
        <begin position="203"/>
        <end position="208"/>
    </location>
</feature>
<feature type="splice variant" id="VSP_011631" description="In isoform 3 and isoform 4." evidence="12 13 14 17 18">
    <location>
        <begin position="233"/>
        <end position="247"/>
    </location>
</feature>
<feature type="mutagenesis site" description="Not sumoylated; when associated with R-228 and R-281." evidence="7">
    <original>K</original>
    <variation>R</variation>
    <location>
        <position position="102"/>
    </location>
</feature>
<feature type="mutagenesis site" description="Not sumoylated; when associated with R-102 and R-281." evidence="7">
    <original>K</original>
    <variation>R</variation>
    <location>
        <position position="228"/>
    </location>
</feature>
<feature type="mutagenesis site" description="Not sumoylated; when associated with R-102 and R-228." evidence="7">
    <original>K</original>
    <variation>R</variation>
    <location>
        <position position="281"/>
    </location>
</feature>
<feature type="sequence conflict" description="In Ref. 1; AAD34050." evidence="19" ref="1">
    <original>A</original>
    <variation>T</variation>
    <location>
        <position position="55"/>
    </location>
</feature>
<feature type="sequence conflict" description="In Ref. 1; AAD34050." evidence="19" ref="1">
    <original>L</original>
    <variation>F</variation>
    <location>
        <position position="101"/>
    </location>
</feature>
<feature type="sequence conflict" description="In Ref. 3; BAC11324." evidence="19" ref="3">
    <original>N</original>
    <variation>S</variation>
    <location>
        <position position="312"/>
    </location>
</feature>
<feature type="sequence conflict" description="In Ref. 6; AAH02488." evidence="19" ref="6">
    <original>R</original>
    <variation>C</variation>
    <location>
        <position position="376"/>
    </location>
</feature>
<feature type="modified residue" description="Phosphoserine" evidence="21 22">
    <location sequence="Q8NC51-3">
        <position position="237"/>
    </location>
</feature>
<feature type="modified residue" description="Phosphothreonine" evidence="22">
    <location sequence="Q8NC51-3">
        <position position="240"/>
    </location>
</feature>
<feature type="cross-link" description="Glycyl lysine isopeptide (Lys-Gly) (interchain with G-Cter in SUMO2)" evidence="33">
    <location sequence="Q8NC51-3">
        <position position="228"/>
    </location>
</feature>
<feature type="modified residue" description="Phosphoserine" evidence="21 22">
    <location sequence="Q8NC51-4">
        <position position="231"/>
    </location>
</feature>
<feature type="modified residue" description="Phosphothreonine" evidence="22">
    <location sequence="Q8NC51-4">
        <position position="234"/>
    </location>
</feature>
<feature type="cross-link" description="Glycyl lysine isopeptide (Lys-Gly) (interchain with G-Cter in SUMO2)" evidence="33">
    <location sequence="Q8NC51-4">
        <position position="222"/>
    </location>
</feature>
<organism>
    <name type="scientific">Homo sapiens</name>
    <name type="common">Human</name>
    <dbReference type="NCBI Taxonomy" id="9606"/>
    <lineage>
        <taxon>Eukaryota</taxon>
        <taxon>Metazoa</taxon>
        <taxon>Chordata</taxon>
        <taxon>Craniata</taxon>
        <taxon>Vertebrata</taxon>
        <taxon>Euteleostomi</taxon>
        <taxon>Mammalia</taxon>
        <taxon>Eutheria</taxon>
        <taxon>Euarchontoglires</taxon>
        <taxon>Primates</taxon>
        <taxon>Haplorrhini</taxon>
        <taxon>Catarrhini</taxon>
        <taxon>Hominidae</taxon>
        <taxon>Homo</taxon>
    </lineage>
</organism>
<protein>
    <recommendedName>
        <fullName>SERPINE1 mRNA-binding protein 1</fullName>
    </recommendedName>
    <alternativeName>
        <fullName>PAI1 RNA-binding protein 1</fullName>
        <shortName>PAI-RBP1</shortName>
    </alternativeName>
    <alternativeName>
        <fullName evidence="19">Plasminogen activator inhibitor 1 RNA-binding protein</fullName>
    </alternativeName>
</protein>
<keyword id="KW-0002">3D-structure</keyword>
<keyword id="KW-0007">Acetylation</keyword>
<keyword id="KW-0025">Alternative splicing</keyword>
<keyword id="KW-0963">Cytoplasm</keyword>
<keyword id="KW-0903">Direct protein sequencing</keyword>
<keyword id="KW-1017">Isopeptide bond</keyword>
<keyword id="KW-0488">Methylation</keyword>
<keyword id="KW-0539">Nucleus</keyword>
<keyword id="KW-0597">Phosphoprotein</keyword>
<keyword id="KW-1267">Proteomics identification</keyword>
<keyword id="KW-1185">Reference proteome</keyword>
<keyword id="KW-0694">RNA-binding</keyword>
<keyword id="KW-0810">Translation regulation</keyword>
<keyword id="KW-0832">Ubl conjugation</keyword>
<proteinExistence type="evidence at protein level"/>
<sequence length="408" mass="44965">MPGHLQEGFGCVVTNRFDQLFDDESDPFEVLKAAENKKKEAGGGGVGGPGAKSAAQAAAQTNSNAAGKQLRKESQKDRKNPLPPSVGVVDKKEETQPPVALKKEGIRRVGRRPDQQLQGEGKIIDRRPERRPPRERRFEKPLEEKGEGGEFSVDRPIIDRPIRGRGGLGRGRGGRGRGMGRGDGFDSRGKREFDRHSGSDRSSFSHYSGLKHEDKRGGSGSHNWGTVKDELTESPKYIQKQISYNYSDLDQSNVTEETPEGEEHHPVADTENKENEVEEVKEEGPKEMTLDEWKAIQNKDRAKVEFNIRKPNEGADGQWKKGFVLHKSKSEEAHAEDSVMDHHFRKPANDITSQLEINFGDLGRPGRGGRGGRGGRGRGGRPNRGSRTDKSSASAPDVDDPEAFPALA</sequence>
<gene>
    <name evidence="16 20" type="primary">SERBP1</name>
    <name type="synonym">PAIRBP1</name>
    <name evidence="15" type="ORF">CGI-55</name>
</gene>
<dbReference type="EMBL" id="AF151813">
    <property type="protein sequence ID" value="AAD34050.1"/>
    <property type="molecule type" value="mRNA"/>
</dbReference>
<dbReference type="EMBL" id="AL080119">
    <property type="protein sequence ID" value="CAB45718.1"/>
    <property type="molecule type" value="mRNA"/>
</dbReference>
<dbReference type="EMBL" id="AK074970">
    <property type="protein sequence ID" value="BAC11324.1"/>
    <property type="molecule type" value="mRNA"/>
</dbReference>
<dbReference type="EMBL" id="CR457383">
    <property type="protein sequence ID" value="CAG33664.1"/>
    <property type="molecule type" value="mRNA"/>
</dbReference>
<dbReference type="EMBL" id="AL590559">
    <property type="status" value="NOT_ANNOTATED_CDS"/>
    <property type="molecule type" value="Genomic_DNA"/>
</dbReference>
<dbReference type="EMBL" id="BC003049">
    <property type="protein sequence ID" value="AAH03049.1"/>
    <property type="molecule type" value="mRNA"/>
</dbReference>
<dbReference type="EMBL" id="BC008045">
    <property type="protein sequence ID" value="AAH08045.1"/>
    <property type="molecule type" value="mRNA"/>
</dbReference>
<dbReference type="EMBL" id="BC017449">
    <property type="protein sequence ID" value="AAH17449.1"/>
    <property type="molecule type" value="mRNA"/>
</dbReference>
<dbReference type="EMBL" id="BC019273">
    <property type="protein sequence ID" value="AAH19273.1"/>
    <property type="molecule type" value="mRNA"/>
</dbReference>
<dbReference type="EMBL" id="BC020555">
    <property type="protein sequence ID" value="AAH20555.1"/>
    <property type="molecule type" value="mRNA"/>
</dbReference>
<dbReference type="EMBL" id="BC002488">
    <property type="protein sequence ID" value="AAH02488.1"/>
    <property type="molecule type" value="mRNA"/>
</dbReference>
<dbReference type="EMBL" id="BC026916">
    <property type="protein sequence ID" value="AAH26916.1"/>
    <property type="molecule type" value="mRNA"/>
</dbReference>
<dbReference type="EMBL" id="AY032853">
    <property type="protein sequence ID" value="AAK51130.1"/>
    <property type="molecule type" value="mRNA"/>
</dbReference>
<dbReference type="CCDS" id="CCDS30746.1">
    <molecule id="Q8NC51-1"/>
</dbReference>
<dbReference type="CCDS" id="CCDS30747.1">
    <molecule id="Q8NC51-3"/>
</dbReference>
<dbReference type="CCDS" id="CCDS30748.1">
    <molecule id="Q8NC51-2"/>
</dbReference>
<dbReference type="CCDS" id="CCDS639.1">
    <molecule id="Q8NC51-4"/>
</dbReference>
<dbReference type="PIR" id="T12456">
    <property type="entry name" value="T12456"/>
</dbReference>
<dbReference type="RefSeq" id="NP_001018077.1">
    <molecule id="Q8NC51-1"/>
    <property type="nucleotide sequence ID" value="NM_001018067.2"/>
</dbReference>
<dbReference type="RefSeq" id="NP_001018078.1">
    <molecule id="Q8NC51-2"/>
    <property type="nucleotide sequence ID" value="NM_001018068.2"/>
</dbReference>
<dbReference type="RefSeq" id="NP_001018079.1">
    <molecule id="Q8NC51-3"/>
    <property type="nucleotide sequence ID" value="NM_001018069.2"/>
</dbReference>
<dbReference type="RefSeq" id="NP_056455.3">
    <molecule id="Q8NC51-4"/>
    <property type="nucleotide sequence ID" value="NM_015640.3"/>
</dbReference>
<dbReference type="PDB" id="4V6X">
    <property type="method" value="EM"/>
    <property type="resolution" value="5.00 A"/>
    <property type="chains" value="Ah=1-408"/>
</dbReference>
<dbReference type="PDB" id="6Z6M">
    <property type="method" value="EM"/>
    <property type="resolution" value="3.10 A"/>
    <property type="chains" value="CD=1-408"/>
</dbReference>
<dbReference type="PDB" id="6Z6N">
    <property type="method" value="EM"/>
    <property type="resolution" value="2.90 A"/>
    <property type="chains" value="CD=1-408"/>
</dbReference>
<dbReference type="PDB" id="8K2C">
    <property type="method" value="EM"/>
    <property type="resolution" value="2.40 A"/>
    <property type="chains" value="CB=1-408"/>
</dbReference>
<dbReference type="PDB" id="8UKB">
    <property type="method" value="EM"/>
    <property type="resolution" value="3.05 A"/>
    <property type="chains" value="CD=183-241"/>
</dbReference>
<dbReference type="PDB" id="8XSX">
    <property type="method" value="EM"/>
    <property type="resolution" value="2.40 A"/>
    <property type="chains" value="CD=1-408"/>
</dbReference>
<dbReference type="PDB" id="8XSY">
    <property type="method" value="EM"/>
    <property type="resolution" value="3.00 A"/>
    <property type="chains" value="CB=1-408"/>
</dbReference>
<dbReference type="PDB" id="8XSZ">
    <property type="method" value="EM"/>
    <property type="resolution" value="3.20 A"/>
    <property type="chains" value="CB=1-408"/>
</dbReference>
<dbReference type="PDB" id="8Y0W">
    <property type="method" value="EM"/>
    <property type="resolution" value="3.40 A"/>
    <property type="chains" value="S=1-408"/>
</dbReference>
<dbReference type="PDB" id="8Y0X">
    <property type="method" value="EM"/>
    <property type="resolution" value="3.30 A"/>
    <property type="chains" value="S=1-408"/>
</dbReference>
<dbReference type="PDBsum" id="4V6X"/>
<dbReference type="PDBsum" id="6Z6M"/>
<dbReference type="PDBsum" id="6Z6N"/>
<dbReference type="PDBsum" id="8K2C"/>
<dbReference type="PDBsum" id="8UKB"/>
<dbReference type="PDBsum" id="8XSX"/>
<dbReference type="PDBsum" id="8XSY"/>
<dbReference type="PDBsum" id="8XSZ"/>
<dbReference type="PDBsum" id="8Y0W"/>
<dbReference type="PDBsum" id="8Y0X"/>
<dbReference type="EMDB" id="EMD-11099"/>
<dbReference type="EMDB" id="EMD-11100"/>
<dbReference type="EMDB" id="EMD-36838"/>
<dbReference type="EMDB" id="EMD-38629"/>
<dbReference type="EMDB" id="EMD-38630"/>
<dbReference type="EMDB" id="EMD-38631"/>
<dbReference type="BioGRID" id="117571">
    <property type="interactions" value="1474"/>
</dbReference>
<dbReference type="CORUM" id="Q8NC51"/>
<dbReference type="DIP" id="DIP-33819N"/>
<dbReference type="FunCoup" id="Q8NC51">
    <property type="interactions" value="3801"/>
</dbReference>
<dbReference type="IntAct" id="Q8NC51">
    <property type="interactions" value="261"/>
</dbReference>
<dbReference type="MINT" id="Q8NC51"/>
<dbReference type="STRING" id="9606.ENSP00000360034"/>
<dbReference type="CarbonylDB" id="Q8NC51"/>
<dbReference type="GlyGen" id="Q8NC51">
    <property type="glycosylation" value="2 sites, 1 O-linked glycan (2 sites)"/>
</dbReference>
<dbReference type="iPTMnet" id="Q8NC51"/>
<dbReference type="MetOSite" id="Q8NC51"/>
<dbReference type="PhosphoSitePlus" id="Q8NC51"/>
<dbReference type="SwissPalm" id="Q8NC51"/>
<dbReference type="BioMuta" id="SERBP1"/>
<dbReference type="DMDM" id="52783206"/>
<dbReference type="jPOST" id="Q8NC51"/>
<dbReference type="MassIVE" id="Q8NC51"/>
<dbReference type="PaxDb" id="9606-ENSP00000360034"/>
<dbReference type="PeptideAtlas" id="Q8NC51"/>
<dbReference type="ProteomicsDB" id="72850">
    <molecule id="Q8NC51-1"/>
</dbReference>
<dbReference type="ProteomicsDB" id="72851">
    <molecule id="Q8NC51-2"/>
</dbReference>
<dbReference type="ProteomicsDB" id="72852">
    <molecule id="Q8NC51-3"/>
</dbReference>
<dbReference type="ProteomicsDB" id="72853">
    <molecule id="Q8NC51-4"/>
</dbReference>
<dbReference type="Pumba" id="Q8NC51"/>
<dbReference type="TopDownProteomics" id="Q8NC51-1">
    <molecule id="Q8NC51-1"/>
</dbReference>
<dbReference type="TopDownProteomics" id="Q8NC51-2">
    <molecule id="Q8NC51-2"/>
</dbReference>
<dbReference type="TopDownProteomics" id="Q8NC51-3">
    <molecule id="Q8NC51-3"/>
</dbReference>
<dbReference type="TopDownProteomics" id="Q8NC51-4">
    <molecule id="Q8NC51-4"/>
</dbReference>
<dbReference type="Antibodypedia" id="19619">
    <property type="antibodies" value="431 antibodies from 28 providers"/>
</dbReference>
<dbReference type="DNASU" id="26135"/>
<dbReference type="Ensembl" id="ENST00000361219.11">
    <molecule id="Q8NC51-3"/>
    <property type="protein sequence ID" value="ENSP00000354591.6"/>
    <property type="gene ID" value="ENSG00000142864.15"/>
</dbReference>
<dbReference type="Ensembl" id="ENST00000370990.5">
    <molecule id="Q8NC51-2"/>
    <property type="protein sequence ID" value="ENSP00000360029.5"/>
    <property type="gene ID" value="ENSG00000142864.15"/>
</dbReference>
<dbReference type="Ensembl" id="ENST00000370994.8">
    <molecule id="Q8NC51-4"/>
    <property type="protein sequence ID" value="ENSP00000360033.4"/>
    <property type="gene ID" value="ENSG00000142864.15"/>
</dbReference>
<dbReference type="Ensembl" id="ENST00000370995.6">
    <molecule id="Q8NC51-1"/>
    <property type="protein sequence ID" value="ENSP00000360034.2"/>
    <property type="gene ID" value="ENSG00000142864.15"/>
</dbReference>
<dbReference type="GeneID" id="26135"/>
<dbReference type="KEGG" id="hsa:26135"/>
<dbReference type="MANE-Select" id="ENST00000361219.11">
    <molecule id="Q8NC51-3"/>
    <property type="protein sequence ID" value="ENSP00000354591.6"/>
    <property type="RefSeq nucleotide sequence ID" value="NM_001018069.2"/>
    <property type="RefSeq protein sequence ID" value="NP_001018079.1"/>
</dbReference>
<dbReference type="UCSC" id="uc001ddv.4">
    <molecule id="Q8NC51-1"/>
    <property type="organism name" value="human"/>
</dbReference>
<dbReference type="AGR" id="HGNC:17860"/>
<dbReference type="CTD" id="26135"/>
<dbReference type="DisGeNET" id="26135"/>
<dbReference type="GeneCards" id="SERBP1"/>
<dbReference type="HGNC" id="HGNC:17860">
    <property type="gene designation" value="SERBP1"/>
</dbReference>
<dbReference type="HPA" id="ENSG00000142864">
    <property type="expression patterns" value="Low tissue specificity"/>
</dbReference>
<dbReference type="MIM" id="607378">
    <property type="type" value="gene"/>
</dbReference>
<dbReference type="neXtProt" id="NX_Q8NC51"/>
<dbReference type="OpenTargets" id="ENSG00000142864"/>
<dbReference type="PharmGKB" id="PA413"/>
<dbReference type="VEuPathDB" id="HostDB:ENSG00000142864"/>
<dbReference type="eggNOG" id="KOG2945">
    <property type="taxonomic scope" value="Eukaryota"/>
</dbReference>
<dbReference type="GeneTree" id="ENSGT00520000055591"/>
<dbReference type="HOGENOM" id="CLU_037366_2_1_1"/>
<dbReference type="InParanoid" id="Q8NC51"/>
<dbReference type="OMA" id="HNWGTIK"/>
<dbReference type="OrthoDB" id="6022699at2759"/>
<dbReference type="PAN-GO" id="Q8NC51">
    <property type="GO annotations" value="3 GO annotations based on evolutionary models"/>
</dbReference>
<dbReference type="PhylomeDB" id="Q8NC51"/>
<dbReference type="TreeFam" id="TF318374"/>
<dbReference type="PathwayCommons" id="Q8NC51"/>
<dbReference type="SignaLink" id="Q8NC51"/>
<dbReference type="BioGRID-ORCS" id="26135">
    <property type="hits" value="304 hits in 1127 CRISPR screens"/>
</dbReference>
<dbReference type="CD-CODE" id="91857CE7">
    <property type="entry name" value="Nucleolus"/>
</dbReference>
<dbReference type="CD-CODE" id="DEE660B4">
    <property type="entry name" value="Stress granule"/>
</dbReference>
<dbReference type="ChiTaRS" id="SERBP1">
    <property type="organism name" value="human"/>
</dbReference>
<dbReference type="GeneWiki" id="SERBP1"/>
<dbReference type="GenomeRNAi" id="26135"/>
<dbReference type="Pharos" id="Q8NC51">
    <property type="development level" value="Tbio"/>
</dbReference>
<dbReference type="PRO" id="PR:Q8NC51"/>
<dbReference type="Proteomes" id="UP000005640">
    <property type="component" value="Chromosome 1"/>
</dbReference>
<dbReference type="RNAct" id="Q8NC51">
    <property type="molecule type" value="protein"/>
</dbReference>
<dbReference type="Bgee" id="ENSG00000142864">
    <property type="expression patterns" value="Expressed in skeletal muscle tissue of biceps brachii and 209 other cell types or tissues"/>
</dbReference>
<dbReference type="ExpressionAtlas" id="Q8NC51">
    <property type="expression patterns" value="baseline and differential"/>
</dbReference>
<dbReference type="GO" id="GO:0005737">
    <property type="term" value="C:cytoplasm"/>
    <property type="evidence" value="ECO:0000314"/>
    <property type="project" value="UniProtKB"/>
</dbReference>
<dbReference type="GO" id="GO:0005829">
    <property type="term" value="C:cytosol"/>
    <property type="evidence" value="ECO:0000314"/>
    <property type="project" value="HPA"/>
</dbReference>
<dbReference type="GO" id="GO:0070062">
    <property type="term" value="C:extracellular exosome"/>
    <property type="evidence" value="ECO:0007005"/>
    <property type="project" value="UniProtKB"/>
</dbReference>
<dbReference type="GO" id="GO:0016020">
    <property type="term" value="C:membrane"/>
    <property type="evidence" value="ECO:0007005"/>
    <property type="project" value="UniProtKB"/>
</dbReference>
<dbReference type="GO" id="GO:0005634">
    <property type="term" value="C:nucleus"/>
    <property type="evidence" value="ECO:0000314"/>
    <property type="project" value="UniProtKB"/>
</dbReference>
<dbReference type="GO" id="GO:0048471">
    <property type="term" value="C:perinuclear region of cytoplasm"/>
    <property type="evidence" value="ECO:0007669"/>
    <property type="project" value="UniProtKB-SubCell"/>
</dbReference>
<dbReference type="GO" id="GO:0045296">
    <property type="term" value="F:cadherin binding"/>
    <property type="evidence" value="ECO:0007005"/>
    <property type="project" value="BHF-UCL"/>
</dbReference>
<dbReference type="GO" id="GO:0003730">
    <property type="term" value="F:mRNA 3'-UTR binding"/>
    <property type="evidence" value="ECO:0000314"/>
    <property type="project" value="HGNC-UCL"/>
</dbReference>
<dbReference type="GO" id="GO:0043022">
    <property type="term" value="F:ribosome binding"/>
    <property type="evidence" value="ECO:0000314"/>
    <property type="project" value="UniProtKB"/>
</dbReference>
<dbReference type="GO" id="GO:0003723">
    <property type="term" value="F:RNA binding"/>
    <property type="evidence" value="ECO:0000269"/>
    <property type="project" value="DisProt"/>
</dbReference>
<dbReference type="GO" id="GO:0032183">
    <property type="term" value="F:SUMO binding"/>
    <property type="evidence" value="ECO:0000314"/>
    <property type="project" value="UniProtKB"/>
</dbReference>
<dbReference type="GO" id="GO:0061770">
    <property type="term" value="F:translation elongation factor binding"/>
    <property type="evidence" value="ECO:0007669"/>
    <property type="project" value="Ensembl"/>
</dbReference>
<dbReference type="GO" id="GO:0030371">
    <property type="term" value="F:translation repressor activity"/>
    <property type="evidence" value="ECO:0000314"/>
    <property type="project" value="UniProtKB"/>
</dbReference>
<dbReference type="GO" id="GO:0017148">
    <property type="term" value="P:negative regulation of translation"/>
    <property type="evidence" value="ECO:0000314"/>
    <property type="project" value="UniProtKB"/>
</dbReference>
<dbReference type="GO" id="GO:0030578">
    <property type="term" value="P:PML body organization"/>
    <property type="evidence" value="ECO:0000314"/>
    <property type="project" value="UniProtKB"/>
</dbReference>
<dbReference type="GO" id="GO:0043488">
    <property type="term" value="P:regulation of mRNA stability"/>
    <property type="evidence" value="ECO:0000303"/>
    <property type="project" value="HGNC-UCL"/>
</dbReference>
<dbReference type="GO" id="GO:0141014">
    <property type="term" value="P:ribosome hibernation"/>
    <property type="evidence" value="ECO:0000314"/>
    <property type="project" value="UniProtKB"/>
</dbReference>
<dbReference type="InterPro" id="IPR039764">
    <property type="entry name" value="HABP4/SERBP1-like"/>
</dbReference>
<dbReference type="InterPro" id="IPR006861">
    <property type="entry name" value="HABP4_PAIRBP1-bd"/>
</dbReference>
<dbReference type="InterPro" id="IPR032381">
    <property type="entry name" value="IHABP4_N"/>
</dbReference>
<dbReference type="PANTHER" id="PTHR12299">
    <property type="entry name" value="HYALURONIC ACID-BINDING PROTEIN 4"/>
    <property type="match status" value="1"/>
</dbReference>
<dbReference type="PANTHER" id="PTHR12299:SF29">
    <property type="entry name" value="SERPINE1 MRNA-BINDING PROTEIN 1"/>
    <property type="match status" value="1"/>
</dbReference>
<dbReference type="Pfam" id="PF04774">
    <property type="entry name" value="HABP4_PAI-RBP1"/>
    <property type="match status" value="1"/>
</dbReference>
<dbReference type="Pfam" id="PF16174">
    <property type="entry name" value="IHABP4_N"/>
    <property type="match status" value="1"/>
</dbReference>
<dbReference type="SMART" id="SM01233">
    <property type="entry name" value="HABP4_PAI-RBP1"/>
    <property type="match status" value="1"/>
</dbReference>
<accession>Q8NC51</accession>
<accession>Q5VU19</accession>
<accession>Q5VU20</accession>
<accession>Q5VU22</accession>
<accession>Q8WUH0</accession>
<accession>Q96SE2</accession>
<accession>Q9BTY3</accession>
<accession>Q9BUM4</accession>
<accession>Q9Y367</accession>
<accession>Q9Y4S3</accession>
<comment type="function">
    <text evidence="1 3 7 10">Ribosome-binding protein that promotes ribosome hibernation, a process during which ribosomes are stabilized in an inactive state and preserved from proteasomal degradation (PubMed:36691768). Acts via its association with EEF2/eEF2 factor, sequestering EEF2/eEF2 at the A-site of the ribosome and promoting ribosome stabilization and storage in an inactive state (By similarity). May also play a role in the regulation of mRNA stability: binds to the 3'-most 134 nt of the SERPINE1/PAI1 mRNA, a region which confers cyclic nucleotide regulation of message decay (PubMed:11001948). Seems to play a role in PML-nuclear bodies formation (PubMed:28695742).</text>
</comment>
<comment type="subunit">
    <text evidence="1 4 5 6 8 9 10">Associates with mature 80S ribosomes (PubMed:23636399, PubMed:32687489, PubMed:36691768). Interacts with EEF2/eEF2; interaction sequesters EEF2/eEF2 at the A-site of the ribosome, thereby blocking the interaction sites of the mRNA-tRNA complex, promoting ribosome stabilization and hibernation (By similarity). Interacts with SPIN1 (By similarity). Interacts with CHD3 and TDRD3 (PubMed:12505151, PubMed:18632687). Interacts with ZDHHC17 (via ANK repeats) (PubMed:28882895).</text>
</comment>
<comment type="interaction">
    <interactant intactId="EBI-523558">
        <id>Q8NC51</id>
    </interactant>
    <interactant intactId="EBI-523590">
        <id>Q12873</id>
        <label>CHD3</label>
    </interactant>
    <organismsDiffer>false</organismsDiffer>
    <experiments>5</experiments>
</comment>
<comment type="interaction">
    <interactant intactId="EBI-523558">
        <id>Q8NC51</id>
    </interactant>
    <interactant intactId="EBI-716404">
        <id>P16284</id>
        <label>PECAM1</label>
    </interactant>
    <organismsDiffer>false</organismsDiffer>
    <experiments>3</experiments>
</comment>
<comment type="interaction">
    <interactant intactId="EBI-523558">
        <id>Q8NC51</id>
    </interactant>
    <interactant intactId="EBI-79165">
        <id>Q9NRD5</id>
        <label>PICK1</label>
    </interactant>
    <organismsDiffer>false</organismsDiffer>
    <experiments>3</experiments>
</comment>
<comment type="interaction">
    <interactant intactId="EBI-523558">
        <id>Q8NC51</id>
    </interactant>
    <interactant intactId="EBI-350723">
        <id>P50454</id>
        <label>SERPINH1</label>
    </interactant>
    <organismsDiffer>false</organismsDiffer>
    <experiments>3</experiments>
</comment>
<comment type="interaction">
    <interactant intactId="EBI-523558">
        <id>Q8NC51</id>
    </interactant>
    <interactant intactId="EBI-296151">
        <id>P37173</id>
        <label>TGFBR2</label>
    </interactant>
    <organismsDiffer>false</organismsDiffer>
    <experiments>3</experiments>
</comment>
<comment type="subcellular location">
    <subcellularLocation>
        <location evidence="4 7">Cytoplasm</location>
    </subcellularLocation>
    <subcellularLocation>
        <location evidence="4 7">Nucleus</location>
    </subcellularLocation>
    <subcellularLocation>
        <location evidence="4">Cytoplasm</location>
        <location evidence="4">Perinuclear region</location>
    </subcellularLocation>
</comment>
<comment type="alternative products">
    <event type="alternative splicing"/>
    <isoform>
        <id>Q8NC51-1</id>
        <name>1</name>
        <sequence type="displayed"/>
    </isoform>
    <isoform>
        <id>Q8NC51-2</id>
        <name>2</name>
        <sequence type="described" ref="VSP_011630"/>
    </isoform>
    <isoform>
        <id>Q8NC51-3</id>
        <name>3</name>
        <sequence type="described" ref="VSP_011631"/>
    </isoform>
    <isoform>
        <id>Q8NC51-4</id>
        <name>4</name>
        <sequence type="described" ref="VSP_011630 VSP_011631"/>
    </isoform>
</comment>
<comment type="tissue specificity">
    <text evidence="4">Expressed at high level in the heart, skeletal muscle and kidney, and at low levels in placenta, liver and brain.</text>
</comment>
<comment type="PTM">
    <text evidence="10">Phosphorylation by MTOR inhibits SERBP1 and relieves ribosome hibernation.</text>
</comment>
<comment type="miscellaneous">
    <molecule>Isoform 2</molecule>
    <text evidence="19">May be due to a competing acceptor splice site.</text>
</comment>
<comment type="miscellaneous">
    <molecule>Isoform 3</molecule>
    <text evidence="19">May be due to a competing acceptor splice site.</text>
</comment>
<comment type="similarity">
    <text evidence="19">Belongs to the SERBP1-HABP4 family.</text>
</comment>
<name>SERB1_HUMAN</name>